<accession>C1EM34</accession>
<gene>
    <name evidence="1" type="primary">phnW</name>
    <name type="ordered locus">BCA_1379</name>
</gene>
<reference key="1">
    <citation type="submission" date="2009-02" db="EMBL/GenBank/DDBJ databases">
        <title>Genome sequence of Bacillus cereus 03BB102.</title>
        <authorList>
            <person name="Dodson R.J."/>
            <person name="Jackson P."/>
            <person name="Munk A.C."/>
            <person name="Brettin T."/>
            <person name="Bruce D."/>
            <person name="Detter C."/>
            <person name="Tapia R."/>
            <person name="Han C."/>
            <person name="Sutton G."/>
            <person name="Sims D."/>
        </authorList>
    </citation>
    <scope>NUCLEOTIDE SEQUENCE [LARGE SCALE GENOMIC DNA]</scope>
    <source>
        <strain>03BB102</strain>
    </source>
</reference>
<feature type="chain" id="PRO_1000184192" description="2-aminoethylphosphonate--pyruvate transaminase">
    <location>
        <begin position="1"/>
        <end position="365"/>
    </location>
</feature>
<feature type="modified residue" description="N6-(pyridoxal phosphate)lysine" evidence="1">
    <location>
        <position position="194"/>
    </location>
</feature>
<comment type="function">
    <text evidence="1">Involved in phosphonate degradation.</text>
</comment>
<comment type="catalytic activity">
    <reaction evidence="1">
        <text>(2-aminoethyl)phosphonate + pyruvate = phosphonoacetaldehyde + L-alanine</text>
        <dbReference type="Rhea" id="RHEA:17021"/>
        <dbReference type="ChEBI" id="CHEBI:15361"/>
        <dbReference type="ChEBI" id="CHEBI:57418"/>
        <dbReference type="ChEBI" id="CHEBI:57972"/>
        <dbReference type="ChEBI" id="CHEBI:58383"/>
        <dbReference type="EC" id="2.6.1.37"/>
    </reaction>
</comment>
<comment type="cofactor">
    <cofactor evidence="1">
        <name>pyridoxal 5'-phosphate</name>
        <dbReference type="ChEBI" id="CHEBI:597326"/>
    </cofactor>
</comment>
<comment type="subunit">
    <text evidence="1">Homodimer.</text>
</comment>
<comment type="similarity">
    <text evidence="1">Belongs to the class-V pyridoxal-phosphate-dependent aminotransferase family. PhnW subfamily.</text>
</comment>
<protein>
    <recommendedName>
        <fullName evidence="1">2-aminoethylphosphonate--pyruvate transaminase</fullName>
        <ecNumber evidence="1">2.6.1.37</ecNumber>
    </recommendedName>
    <alternativeName>
        <fullName evidence="1">2-aminoethylphosphonate aminotransferase</fullName>
    </alternativeName>
    <alternativeName>
        <fullName evidence="1">AEP transaminase</fullName>
        <shortName evidence="1">AEPT</shortName>
    </alternativeName>
</protein>
<evidence type="ECO:0000255" key="1">
    <source>
        <dbReference type="HAMAP-Rule" id="MF_01376"/>
    </source>
</evidence>
<proteinExistence type="inferred from homology"/>
<organism>
    <name type="scientific">Bacillus cereus (strain 03BB102)</name>
    <dbReference type="NCBI Taxonomy" id="572264"/>
    <lineage>
        <taxon>Bacteria</taxon>
        <taxon>Bacillati</taxon>
        <taxon>Bacillota</taxon>
        <taxon>Bacilli</taxon>
        <taxon>Bacillales</taxon>
        <taxon>Bacillaceae</taxon>
        <taxon>Bacillus</taxon>
        <taxon>Bacillus cereus group</taxon>
    </lineage>
</organism>
<dbReference type="EC" id="2.6.1.37" evidence="1"/>
<dbReference type="EMBL" id="CP001407">
    <property type="protein sequence ID" value="ACO27256.1"/>
    <property type="molecule type" value="Genomic_DNA"/>
</dbReference>
<dbReference type="RefSeq" id="WP_000138242.1">
    <property type="nucleotide sequence ID" value="NZ_CP009318.1"/>
</dbReference>
<dbReference type="SMR" id="C1EM34"/>
<dbReference type="KEGG" id="bcx:BCA_1379"/>
<dbReference type="PATRIC" id="fig|572264.18.peg.1330"/>
<dbReference type="Proteomes" id="UP000002210">
    <property type="component" value="Chromosome"/>
</dbReference>
<dbReference type="GO" id="GO:0047304">
    <property type="term" value="F:2-aminoethylphosphonate-pyruvate transaminase activity"/>
    <property type="evidence" value="ECO:0007669"/>
    <property type="project" value="UniProtKB-UniRule"/>
</dbReference>
<dbReference type="GO" id="GO:0019700">
    <property type="term" value="P:organic phosphonate catabolic process"/>
    <property type="evidence" value="ECO:0007669"/>
    <property type="project" value="InterPro"/>
</dbReference>
<dbReference type="Gene3D" id="3.90.1150.10">
    <property type="entry name" value="Aspartate Aminotransferase, domain 1"/>
    <property type="match status" value="1"/>
</dbReference>
<dbReference type="Gene3D" id="3.40.640.10">
    <property type="entry name" value="Type I PLP-dependent aspartate aminotransferase-like (Major domain)"/>
    <property type="match status" value="1"/>
</dbReference>
<dbReference type="HAMAP" id="MF_01376">
    <property type="entry name" value="PhnW_aminotrans_5"/>
    <property type="match status" value="1"/>
</dbReference>
<dbReference type="InterPro" id="IPR000192">
    <property type="entry name" value="Aminotrans_V_dom"/>
</dbReference>
<dbReference type="InterPro" id="IPR012703">
    <property type="entry name" value="NH2EtPonate_pyrv_transaminase"/>
</dbReference>
<dbReference type="InterPro" id="IPR015424">
    <property type="entry name" value="PyrdxlP-dep_Trfase"/>
</dbReference>
<dbReference type="InterPro" id="IPR015421">
    <property type="entry name" value="PyrdxlP-dep_Trfase_major"/>
</dbReference>
<dbReference type="InterPro" id="IPR015422">
    <property type="entry name" value="PyrdxlP-dep_Trfase_small"/>
</dbReference>
<dbReference type="InterPro" id="IPR024169">
    <property type="entry name" value="SP_NH2Trfase/AEP_transaminase"/>
</dbReference>
<dbReference type="NCBIfam" id="TIGR03301">
    <property type="entry name" value="PhnW-AepZ"/>
    <property type="match status" value="1"/>
</dbReference>
<dbReference type="NCBIfam" id="NF010006">
    <property type="entry name" value="PRK13479.1"/>
    <property type="match status" value="1"/>
</dbReference>
<dbReference type="NCBIfam" id="TIGR02326">
    <property type="entry name" value="transamin_PhnW"/>
    <property type="match status" value="1"/>
</dbReference>
<dbReference type="PANTHER" id="PTHR42778">
    <property type="entry name" value="2-AMINOETHYLPHOSPHONATE--PYRUVATE TRANSAMINASE"/>
    <property type="match status" value="1"/>
</dbReference>
<dbReference type="PANTHER" id="PTHR42778:SF1">
    <property type="entry name" value="2-AMINOETHYLPHOSPHONATE--PYRUVATE TRANSAMINASE"/>
    <property type="match status" value="1"/>
</dbReference>
<dbReference type="Pfam" id="PF00266">
    <property type="entry name" value="Aminotran_5"/>
    <property type="match status" value="1"/>
</dbReference>
<dbReference type="PIRSF" id="PIRSF000524">
    <property type="entry name" value="SPT"/>
    <property type="match status" value="1"/>
</dbReference>
<dbReference type="SUPFAM" id="SSF53383">
    <property type="entry name" value="PLP-dependent transferases"/>
    <property type="match status" value="1"/>
</dbReference>
<sequence length="365" mass="41328">MTENHYLLLTPGPLTTTKTVKEVMLYDWCTWDVEYNMMVQKVRAKLVSLATKEEEKYTTVLMQGSGTFSVEAVIGSVIPKNGKLLVCTNGAYGKRIVQMAEMLHIDVVVSQTEEWEPTNIVEVEKILQQDKEITHIAVVHCETTTGIINPIVDVCKLGKQYGKVTLVDAMSSFGGIEIDIAELQIDFLISSANKCIQGVPGFGFVIAQRDELLKCKGQARSLSLDLYDQWETMENQNGKWRFTSPTHVVHAFYQALLELEKEGGVRARYNRYYNNQKLLVNRMGEIGFKPLVNEKYQSPIITSFIYPEGNFEFQQLYNELKRYGFVIYPGKISKVDTFRIGNIGDVHEEDINRLVDSIAKGVVIG</sequence>
<name>PHNW_BACC3</name>
<keyword id="KW-0032">Aminotransferase</keyword>
<keyword id="KW-0663">Pyridoxal phosphate</keyword>
<keyword id="KW-0670">Pyruvate</keyword>
<keyword id="KW-0808">Transferase</keyword>